<reference key="1">
    <citation type="journal article" date="1997" name="Genes Cells">
        <title>HsMCM6: a new member of the human MCM/P1 family encodes a protein homologous to fission yeast Mis5.</title>
        <authorList>
            <person name="Tsuruga H."/>
            <person name="Yabuta N."/>
            <person name="Hosoya S."/>
            <person name="Tamura K."/>
            <person name="Endo Y."/>
            <person name="Nojima H."/>
        </authorList>
    </citation>
    <scope>NUCLEOTIDE SEQUENCE [MRNA]</scope>
</reference>
<reference key="2">
    <citation type="journal article" date="1998" name="J. Biol. Chem.">
        <title>Human protein MCM6 on HeLa cell chromatin.</title>
        <authorList>
            <person name="Holthoff H.P."/>
            <person name="Baack M."/>
            <person name="Richter A."/>
            <person name="Ritzi M."/>
            <person name="Knippers R."/>
        </authorList>
    </citation>
    <scope>NUCLEOTIDE SEQUENCE [MRNA]</scope>
</reference>
<reference key="3">
    <citation type="submission" date="2003-01" db="EMBL/GenBank/DDBJ databases">
        <authorList>
            <consortium name="NIEHS SNPs program"/>
        </authorList>
    </citation>
    <scope>NUCLEOTIDE SEQUENCE [GENOMIC DNA]</scope>
    <scope>VARIANT LYS-806</scope>
</reference>
<reference key="4">
    <citation type="journal article" date="2004" name="Nat. Genet.">
        <title>Complete sequencing and characterization of 21,243 full-length human cDNAs.</title>
        <authorList>
            <person name="Ota T."/>
            <person name="Suzuki Y."/>
            <person name="Nishikawa T."/>
            <person name="Otsuki T."/>
            <person name="Sugiyama T."/>
            <person name="Irie R."/>
            <person name="Wakamatsu A."/>
            <person name="Hayashi K."/>
            <person name="Sato H."/>
            <person name="Nagai K."/>
            <person name="Kimura K."/>
            <person name="Makita H."/>
            <person name="Sekine M."/>
            <person name="Obayashi M."/>
            <person name="Nishi T."/>
            <person name="Shibahara T."/>
            <person name="Tanaka T."/>
            <person name="Ishii S."/>
            <person name="Yamamoto J."/>
            <person name="Saito K."/>
            <person name="Kawai Y."/>
            <person name="Isono Y."/>
            <person name="Nakamura Y."/>
            <person name="Nagahari K."/>
            <person name="Murakami K."/>
            <person name="Yasuda T."/>
            <person name="Iwayanagi T."/>
            <person name="Wagatsuma M."/>
            <person name="Shiratori A."/>
            <person name="Sudo H."/>
            <person name="Hosoiri T."/>
            <person name="Kaku Y."/>
            <person name="Kodaira H."/>
            <person name="Kondo H."/>
            <person name="Sugawara M."/>
            <person name="Takahashi M."/>
            <person name="Kanda K."/>
            <person name="Yokoi T."/>
            <person name="Furuya T."/>
            <person name="Kikkawa E."/>
            <person name="Omura Y."/>
            <person name="Abe K."/>
            <person name="Kamihara K."/>
            <person name="Katsuta N."/>
            <person name="Sato K."/>
            <person name="Tanikawa M."/>
            <person name="Yamazaki M."/>
            <person name="Ninomiya K."/>
            <person name="Ishibashi T."/>
            <person name="Yamashita H."/>
            <person name="Murakawa K."/>
            <person name="Fujimori K."/>
            <person name="Tanai H."/>
            <person name="Kimata M."/>
            <person name="Watanabe M."/>
            <person name="Hiraoka S."/>
            <person name="Chiba Y."/>
            <person name="Ishida S."/>
            <person name="Ono Y."/>
            <person name="Takiguchi S."/>
            <person name="Watanabe S."/>
            <person name="Yosida M."/>
            <person name="Hotuta T."/>
            <person name="Kusano J."/>
            <person name="Kanehori K."/>
            <person name="Takahashi-Fujii A."/>
            <person name="Hara H."/>
            <person name="Tanase T.-O."/>
            <person name="Nomura Y."/>
            <person name="Togiya S."/>
            <person name="Komai F."/>
            <person name="Hara R."/>
            <person name="Takeuchi K."/>
            <person name="Arita M."/>
            <person name="Imose N."/>
            <person name="Musashino K."/>
            <person name="Yuuki H."/>
            <person name="Oshima A."/>
            <person name="Sasaki N."/>
            <person name="Aotsuka S."/>
            <person name="Yoshikawa Y."/>
            <person name="Matsunawa H."/>
            <person name="Ichihara T."/>
            <person name="Shiohata N."/>
            <person name="Sano S."/>
            <person name="Moriya S."/>
            <person name="Momiyama H."/>
            <person name="Satoh N."/>
            <person name="Takami S."/>
            <person name="Terashima Y."/>
            <person name="Suzuki O."/>
            <person name="Nakagawa S."/>
            <person name="Senoh A."/>
            <person name="Mizoguchi H."/>
            <person name="Goto Y."/>
            <person name="Shimizu F."/>
            <person name="Wakebe H."/>
            <person name="Hishigaki H."/>
            <person name="Watanabe T."/>
            <person name="Sugiyama A."/>
            <person name="Takemoto M."/>
            <person name="Kawakami B."/>
            <person name="Yamazaki M."/>
            <person name="Watanabe K."/>
            <person name="Kumagai A."/>
            <person name="Itakura S."/>
            <person name="Fukuzumi Y."/>
            <person name="Fujimori Y."/>
            <person name="Komiyama M."/>
            <person name="Tashiro H."/>
            <person name="Tanigami A."/>
            <person name="Fujiwara T."/>
            <person name="Ono T."/>
            <person name="Yamada K."/>
            <person name="Fujii Y."/>
            <person name="Ozaki K."/>
            <person name="Hirao M."/>
            <person name="Ohmori Y."/>
            <person name="Kawabata A."/>
            <person name="Hikiji T."/>
            <person name="Kobatake N."/>
            <person name="Inagaki H."/>
            <person name="Ikema Y."/>
            <person name="Okamoto S."/>
            <person name="Okitani R."/>
            <person name="Kawakami T."/>
            <person name="Noguchi S."/>
            <person name="Itoh T."/>
            <person name="Shigeta K."/>
            <person name="Senba T."/>
            <person name="Matsumura K."/>
            <person name="Nakajima Y."/>
            <person name="Mizuno T."/>
            <person name="Morinaga M."/>
            <person name="Sasaki M."/>
            <person name="Togashi T."/>
            <person name="Oyama M."/>
            <person name="Hata H."/>
            <person name="Watanabe M."/>
            <person name="Komatsu T."/>
            <person name="Mizushima-Sugano J."/>
            <person name="Satoh T."/>
            <person name="Shirai Y."/>
            <person name="Takahashi Y."/>
            <person name="Nakagawa K."/>
            <person name="Okumura K."/>
            <person name="Nagase T."/>
            <person name="Nomura N."/>
            <person name="Kikuchi H."/>
            <person name="Masuho Y."/>
            <person name="Yamashita R."/>
            <person name="Nakai K."/>
            <person name="Yada T."/>
            <person name="Nakamura Y."/>
            <person name="Ohara O."/>
            <person name="Isogai T."/>
            <person name="Sugano S."/>
        </authorList>
    </citation>
    <scope>NUCLEOTIDE SEQUENCE [LARGE SCALE MRNA]</scope>
    <source>
        <tissue>Brain</tissue>
    </source>
</reference>
<reference key="5">
    <citation type="submission" date="2005-09" db="EMBL/GenBank/DDBJ databases">
        <authorList>
            <person name="Mural R.J."/>
            <person name="Istrail S."/>
            <person name="Sutton G.G."/>
            <person name="Florea L."/>
            <person name="Halpern A.L."/>
            <person name="Mobarry C.M."/>
            <person name="Lippert R."/>
            <person name="Walenz B."/>
            <person name="Shatkay H."/>
            <person name="Dew I."/>
            <person name="Miller J.R."/>
            <person name="Flanigan M.J."/>
            <person name="Edwards N.J."/>
            <person name="Bolanos R."/>
            <person name="Fasulo D."/>
            <person name="Halldorsson B.V."/>
            <person name="Hannenhalli S."/>
            <person name="Turner R."/>
            <person name="Yooseph S."/>
            <person name="Lu F."/>
            <person name="Nusskern D.R."/>
            <person name="Shue B.C."/>
            <person name="Zheng X.H."/>
            <person name="Zhong F."/>
            <person name="Delcher A.L."/>
            <person name="Huson D.H."/>
            <person name="Kravitz S.A."/>
            <person name="Mouchard L."/>
            <person name="Reinert K."/>
            <person name="Remington K.A."/>
            <person name="Clark A.G."/>
            <person name="Waterman M.S."/>
            <person name="Eichler E.E."/>
            <person name="Adams M.D."/>
            <person name="Hunkapiller M.W."/>
            <person name="Myers E.W."/>
            <person name="Venter J.C."/>
        </authorList>
    </citation>
    <scope>NUCLEOTIDE SEQUENCE [LARGE SCALE GENOMIC DNA]</scope>
</reference>
<reference key="6">
    <citation type="journal article" date="2004" name="Genome Res.">
        <title>The status, quality, and expansion of the NIH full-length cDNA project: the Mammalian Gene Collection (MGC).</title>
        <authorList>
            <consortium name="The MGC Project Team"/>
        </authorList>
    </citation>
    <scope>NUCLEOTIDE SEQUENCE [LARGE SCALE MRNA]</scope>
    <source>
        <tissue>Cervix</tissue>
    </source>
</reference>
<reference key="7">
    <citation type="journal article" date="1996" name="FEBS Lett.">
        <title>Characterisation of a human homologue of a yeast cell division cycle gene, MCM6, located adjacent to the 5' end of the lactase gene on chromosome 2q21.</title>
        <authorList>
            <person name="Harvey C.B."/>
            <person name="Wang Y."/>
            <person name="Darmoul D."/>
            <person name="Phillips A."/>
            <person name="Mantei N."/>
            <person name="Swallow D.M."/>
        </authorList>
    </citation>
    <scope>NUCLEOTIDE SEQUENCE [GENOMIC DNA] OF 640-821</scope>
</reference>
<reference key="8">
    <citation type="journal article" date="1997" name="J. Biol. Chem.">
        <title>A DNA helicase activity is associated with an MCM4, -6, and -7 protein complex.</title>
        <authorList>
            <person name="Ishimi Y."/>
        </authorList>
    </citation>
    <scope>IDENTIFICATION IN THE MCM2-7 COMPLEX</scope>
    <scope>FUNCTION</scope>
</reference>
<reference key="9">
    <citation type="journal article" date="2000" name="Nucleic Acids Res.">
        <title>The human homolog of Saccharomyces cerevisiae Mcm10 interacts with replication factors and dissociates from nuclease-resistant nuclear structures in G(2) phase.</title>
        <authorList>
            <person name="Izumi M."/>
            <person name="Yanagi K."/>
            <person name="Mizuno T."/>
            <person name="Yokoi M."/>
            <person name="Kawasaki Y."/>
            <person name="Moon K.Y."/>
            <person name="Hurwitz J."/>
            <person name="Yatagai F."/>
            <person name="Hanaoka F."/>
        </authorList>
    </citation>
    <scope>INTERACTION WITH MCM10</scope>
</reference>
<reference key="10">
    <citation type="journal article" date="2002" name="Nat. Genet.">
        <title>Identification of a variant associated with adult-type hypolactasia.</title>
        <authorList>
            <person name="Enattah N.S."/>
            <person name="Sahi T."/>
            <person name="Savilahti E."/>
            <person name="Terwilliger J.D."/>
            <person name="Peltonen L."/>
            <person name="Jaervelae I."/>
        </authorList>
    </citation>
    <scope>INVOLVEMENT IN ADULT-TYPE HYPOLACTASIA</scope>
</reference>
<reference key="11">
    <citation type="journal article" date="2003" name="Nature">
        <title>Proteomic characterization of the human centrosome by protein correlation profiling.</title>
        <authorList>
            <person name="Andersen J.S."/>
            <person name="Wilkinson C.J."/>
            <person name="Mayor T."/>
            <person name="Mortensen P."/>
            <person name="Nigg E.A."/>
            <person name="Mann M."/>
        </authorList>
    </citation>
    <scope>IDENTIFICATION BY MASS SPECTROMETRY</scope>
    <source>
        <tissue>Lymphoblast</tissue>
    </source>
</reference>
<reference key="12">
    <citation type="journal article" date="2006" name="Mol. Biol. Cell">
        <title>Essential role of phosphorylation of MCM2 by Cdc7/Dbf4 in the initiation of DNA replication in mammalian cells.</title>
        <authorList>
            <person name="Tsuji T."/>
            <person name="Ficarro S.B."/>
            <person name="Jiang W."/>
        </authorList>
    </citation>
    <scope>IDENTIFICATION IN THE MCM2-7 COMPLEX</scope>
    <scope>ATPASE ACTIVITY OF THE MCM2-7 COMPLEX</scope>
    <scope>SUBCELLULAR LOCATION</scope>
</reference>
<reference key="13">
    <citation type="journal article" date="2006" name="Nat. Biotechnol.">
        <title>A probability-based approach for high-throughput protein phosphorylation analysis and site localization.</title>
        <authorList>
            <person name="Beausoleil S.A."/>
            <person name="Villen J."/>
            <person name="Gerber S.A."/>
            <person name="Rush J."/>
            <person name="Gygi S.P."/>
        </authorList>
    </citation>
    <scope>PHOSPHORYLATION [LARGE SCALE ANALYSIS] AT SER-271 AND SER-762</scope>
    <scope>IDENTIFICATION BY MASS SPECTROMETRY [LARGE SCALE ANALYSIS]</scope>
    <source>
        <tissue>Cervix carcinoma</tissue>
    </source>
</reference>
<reference key="14">
    <citation type="journal article" date="2006" name="Proc. Natl. Acad. Sci. U.S.A.">
        <title>Tipin and Timeless form a mutually protective complex required for genotoxic stress resistance and checkpoint function.</title>
        <authorList>
            <person name="Chou D.M."/>
            <person name="Elledge S.J."/>
        </authorList>
    </citation>
    <scope>INTERACTION WITH TIPIN</scope>
</reference>
<reference key="15">
    <citation type="journal article" date="2007" name="Mol. Cell. Biol.">
        <title>Identification and characterization of a novel component of the human minichromosome maintenance complex.</title>
        <authorList>
            <person name="Sakwe A.M."/>
            <person name="Nguyen T."/>
            <person name="Athanasopoulos V."/>
            <person name="Shire K."/>
            <person name="Frappier L."/>
        </authorList>
    </citation>
    <scope>HELICASE ACTIVITY OF THE MCM2-3 COMPLEX</scope>
    <scope>INTERACTION WITH MCMBP</scope>
    <scope>IDENTIFICATION IN THE MCM2-7 COMPLEX</scope>
    <scope>IDENTIFICATION BY MASS SPECTROMETRY</scope>
</reference>
<reference key="16">
    <citation type="journal article" date="2007" name="Nat. Genet.">
        <title>Convergent adaptation of human lactase persistence in Africa and Europe.</title>
        <authorList>
            <person name="Tishkoff S.A."/>
            <person name="Reed F.A."/>
            <person name="Ranciaro A."/>
            <person name="Voight B.F."/>
            <person name="Babbitt C.C."/>
            <person name="Silverman J.S."/>
            <person name="Powell K."/>
            <person name="Mortensen H.M."/>
            <person name="Hirbo J.B."/>
            <person name="Osman M."/>
            <person name="Ibrahim M."/>
            <person name="Omar S.A."/>
            <person name="Lema G."/>
            <person name="Nyambo T.B."/>
            <person name="Ghori J."/>
            <person name="Bumpstead S."/>
            <person name="Pritchard J.K."/>
            <person name="Wray G.A."/>
            <person name="Deloukas P."/>
        </authorList>
    </citation>
    <scope>POLYMORPHISM</scope>
    <scope>INVOLVEMENT IN ADULT-TYPE HYPOLACTASIA AND LACTASE PERSISTANCE</scope>
</reference>
<reference key="17">
    <citation type="journal article" date="2007" name="Science">
        <title>ATM and ATR substrate analysis reveals extensive protein networks responsive to DNA damage.</title>
        <authorList>
            <person name="Matsuoka S."/>
            <person name="Ballif B.A."/>
            <person name="Smogorzewska A."/>
            <person name="McDonald E.R. III"/>
            <person name="Hurov K.E."/>
            <person name="Luo J."/>
            <person name="Bakalarski C.E."/>
            <person name="Zhao Z."/>
            <person name="Solimini N."/>
            <person name="Lerenthal Y."/>
            <person name="Shiloh Y."/>
            <person name="Gygi S.P."/>
            <person name="Elledge S.J."/>
        </authorList>
    </citation>
    <scope>PHOSPHORYLATION [LARGE SCALE ANALYSIS] AT THR-791</scope>
    <scope>IDENTIFICATION BY MASS SPECTROMETRY [LARGE SCALE ANALYSIS]</scope>
    <source>
        <tissue>Embryonic kidney</tissue>
    </source>
</reference>
<reference key="18">
    <citation type="journal article" date="2008" name="Proc. Natl. Acad. Sci. U.S.A.">
        <title>A quantitative atlas of mitotic phosphorylation.</title>
        <authorList>
            <person name="Dephoure N."/>
            <person name="Zhou C."/>
            <person name="Villen J."/>
            <person name="Beausoleil S.A."/>
            <person name="Bakalarski C.E."/>
            <person name="Elledge S.J."/>
            <person name="Gygi S.P."/>
        </authorList>
    </citation>
    <scope>PHOSPHORYLATION [LARGE SCALE ANALYSIS] AT SER-271 AND SER-762</scope>
    <scope>IDENTIFICATION BY MASS SPECTROMETRY [LARGE SCALE ANALYSIS]</scope>
    <source>
        <tissue>Cervix carcinoma</tissue>
    </source>
</reference>
<reference key="19">
    <citation type="journal article" date="2009" name="Anal. Chem.">
        <title>Lys-N and trypsin cover complementary parts of the phosphoproteome in a refined SCX-based approach.</title>
        <authorList>
            <person name="Gauci S."/>
            <person name="Helbig A.O."/>
            <person name="Slijper M."/>
            <person name="Krijgsveld J."/>
            <person name="Heck A.J."/>
            <person name="Mohammed S."/>
        </authorList>
    </citation>
    <scope>ACETYLATION [LARGE SCALE ANALYSIS] AT MET-1</scope>
    <scope>IDENTIFICATION BY MASS SPECTROMETRY [LARGE SCALE ANALYSIS]</scope>
</reference>
<reference key="20">
    <citation type="journal article" date="2009" name="Sci. Signal.">
        <title>Quantitative phosphoproteomic analysis of T cell receptor signaling reveals system-wide modulation of protein-protein interactions.</title>
        <authorList>
            <person name="Mayya V."/>
            <person name="Lundgren D.H."/>
            <person name="Hwang S.-I."/>
            <person name="Rezaul K."/>
            <person name="Wu L."/>
            <person name="Eng J.K."/>
            <person name="Rodionov V."/>
            <person name="Han D.K."/>
        </authorList>
    </citation>
    <scope>PHOSPHORYLATION [LARGE SCALE ANALYSIS] AT SER-271 AND SER-762</scope>
    <scope>IDENTIFICATION BY MASS SPECTROMETRY [LARGE SCALE ANALYSIS]</scope>
    <source>
        <tissue>Leukemic T-cell</tissue>
    </source>
</reference>
<reference key="21">
    <citation type="journal article" date="2010" name="Sci. Signal.">
        <title>Quantitative phosphoproteomics reveals widespread full phosphorylation site occupancy during mitosis.</title>
        <authorList>
            <person name="Olsen J.V."/>
            <person name="Vermeulen M."/>
            <person name="Santamaria A."/>
            <person name="Kumar C."/>
            <person name="Miller M.L."/>
            <person name="Jensen L.J."/>
            <person name="Gnad F."/>
            <person name="Cox J."/>
            <person name="Jensen T.S."/>
            <person name="Nigg E.A."/>
            <person name="Brunak S."/>
            <person name="Mann M."/>
        </authorList>
    </citation>
    <scope>ACETYLATION [LARGE SCALE ANALYSIS] AT MET-1</scope>
    <scope>PHOSPHORYLATION [LARGE SCALE ANALYSIS] AT SER-13; SER-271 AND SER-762</scope>
    <scope>IDENTIFICATION BY MASS SPECTROMETRY [LARGE SCALE ANALYSIS]</scope>
    <source>
        <tissue>Cervix carcinoma</tissue>
    </source>
</reference>
<reference key="22">
    <citation type="journal article" date="2011" name="BMC Syst. Biol.">
        <title>Initial characterization of the human central proteome.</title>
        <authorList>
            <person name="Burkard T.R."/>
            <person name="Planyavsky M."/>
            <person name="Kaupe I."/>
            <person name="Breitwieser F.P."/>
            <person name="Buerckstuemmer T."/>
            <person name="Bennett K.L."/>
            <person name="Superti-Furga G."/>
            <person name="Colinge J."/>
        </authorList>
    </citation>
    <scope>IDENTIFICATION BY MASS SPECTROMETRY [LARGE SCALE ANALYSIS]</scope>
</reference>
<reference key="23">
    <citation type="journal article" date="2012" name="Biochim. Biophys. Acta">
        <title>Characterization of O-GlcNAc cycling and proteomic identification of differentially O-GlcNAcylated proteins during G1/S transition.</title>
        <authorList>
            <person name="Drougat L."/>
            <person name="Olivier-Van Stichelen S."/>
            <person name="Mortuaire M."/>
            <person name="Foulquier F."/>
            <person name="Lacoste A.S."/>
            <person name="Michalski J.C."/>
            <person name="Lefebvre T."/>
            <person name="Vercoutter-Edouart A.S."/>
        </authorList>
    </citation>
    <scope>GLYCOSYLATION</scope>
</reference>
<reference key="24">
    <citation type="journal article" date="2012" name="Mol. Cell. Proteomics">
        <title>Comparative large-scale characterisation of plant vs. mammal proteins reveals similar and idiosyncratic N-alpha acetylation features.</title>
        <authorList>
            <person name="Bienvenut W.V."/>
            <person name="Sumpton D."/>
            <person name="Martinez A."/>
            <person name="Lilla S."/>
            <person name="Espagne C."/>
            <person name="Meinnel T."/>
            <person name="Giglione C."/>
        </authorList>
    </citation>
    <scope>ACETYLATION [LARGE SCALE ANALYSIS] AT MET-1</scope>
    <scope>IDENTIFICATION BY MASS SPECTROMETRY [LARGE SCALE ANALYSIS]</scope>
</reference>
<reference key="25">
    <citation type="journal article" date="2012" name="Proc. Natl. Acad. Sci. U.S.A.">
        <title>N-terminal acetylome analyses and functional insights of the N-terminal acetyltransferase NatB.</title>
        <authorList>
            <person name="Van Damme P."/>
            <person name="Lasa M."/>
            <person name="Polevoda B."/>
            <person name="Gazquez C."/>
            <person name="Elosegui-Artola A."/>
            <person name="Kim D.S."/>
            <person name="De Juan-Pardo E."/>
            <person name="Demeyer K."/>
            <person name="Hole K."/>
            <person name="Larrea E."/>
            <person name="Timmerman E."/>
            <person name="Prieto J."/>
            <person name="Arnesen T."/>
            <person name="Sherman F."/>
            <person name="Gevaert K."/>
            <person name="Aldabe R."/>
        </authorList>
    </citation>
    <scope>ACETYLATION [LARGE SCALE ANALYSIS] AT MET-1</scope>
    <scope>IDENTIFICATION BY MASS SPECTROMETRY [LARGE SCALE ANALYSIS]</scope>
</reference>
<reference key="26">
    <citation type="journal article" date="2013" name="J. Proteome Res.">
        <title>Toward a comprehensive characterization of a human cancer cell phosphoproteome.</title>
        <authorList>
            <person name="Zhou H."/>
            <person name="Di Palma S."/>
            <person name="Preisinger C."/>
            <person name="Peng M."/>
            <person name="Polat A.N."/>
            <person name="Heck A.J."/>
            <person name="Mohammed S."/>
        </authorList>
    </citation>
    <scope>PHOSPHORYLATION [LARGE SCALE ANALYSIS] AT SER-13; SER-219; SER-271; THR-278 AND SER-762</scope>
    <scope>IDENTIFICATION BY MASS SPECTROMETRY [LARGE SCALE ANALYSIS]</scope>
    <source>
        <tissue>Cervix carcinoma</tissue>
        <tissue>Erythroleukemia</tissue>
    </source>
</reference>
<reference key="27">
    <citation type="journal article" date="2015" name="J. Biochem.">
        <title>G364R mutation of MCM4 detected in human skin cancer cells affects DNA helicase activity of MCM4/6/7 complex.</title>
        <authorList>
            <person name="Ishimi Y."/>
            <person name="Irie D."/>
        </authorList>
    </citation>
    <scope>FUNCTION</scope>
    <scope>CATALYTIC ACTIVITY</scope>
</reference>
<reference key="28">
    <citation type="journal article" date="2018" name="Mol. Cell">
        <title>Removal of RTF2 from Stalled Replisomes Promotes Maintenance of Genome Integrity.</title>
        <authorList>
            <person name="Kottemann M.C."/>
            <person name="Conti B.A."/>
            <person name="Lach F.P."/>
            <person name="Smogorzewska A."/>
        </authorList>
    </citation>
    <scope>INTERACTION WITH DDI2</scope>
</reference>
<reference key="29">
    <citation type="journal article" date="2022" name="Nature">
        <title>Fast and efficient DNA replication with purified human proteins.</title>
        <authorList>
            <person name="Baris Y."/>
            <person name="Taylor M.R.G."/>
            <person name="Aria V."/>
            <person name="Yeeles J.T.P."/>
        </authorList>
    </citation>
    <scope>FUNCTION</scope>
</reference>
<reference key="30">
    <citation type="journal article" date="2010" name="J. Biol. Chem.">
        <title>Characterization and structure determination of the Cdt1 binding domain of human minichromosome maintenance (Mcm) 6.</title>
        <authorList>
            <person name="Wei Z."/>
            <person name="Liu C."/>
            <person name="Wu X."/>
            <person name="Xu N."/>
            <person name="Zhou B."/>
            <person name="Liang C."/>
            <person name="Zhu G."/>
        </authorList>
    </citation>
    <scope>STRUCTURE BY NMR OF 708-821</scope>
    <scope>INTERACTION WITH CDT1</scope>
    <scope>MUTAGENESIS OF GLU-757; GLU-763 AND LEU-766</scope>
</reference>
<reference evidence="21 22" key="31">
    <citation type="journal article" date="2020" name="Nucleic Acids Res.">
        <title>CryoEM structures of human CMG-ATPgammaS-DNA and CMG-AND-1 complexes.</title>
        <authorList>
            <person name="Rzechorzek N.J."/>
            <person name="Hardwick S.W."/>
            <person name="Jatikusumo V.A."/>
            <person name="Chirgadze D.Y."/>
            <person name="Pellegrini L."/>
        </authorList>
    </citation>
    <scope>STRUCTURE BY ELECTRON MICROSCOPY (3.29 ANGSTROMS) IN COMPLEXES WITH ADP; ATP ANALOG AND WDHD1 IN CMG COMPLEX</scope>
    <scope>SUBUNIT</scope>
</reference>
<reference evidence="24" key="32">
    <citation type="journal article" date="2021" name="Nature">
        <title>A conserved mechanism for regulating replisome disassembly in eukaryotes.</title>
        <authorList>
            <person name="Jenkyn-Bedford M."/>
            <person name="Jones M.L."/>
            <person name="Baris Y."/>
            <person name="Labib K.P.M."/>
            <person name="Cannone G."/>
            <person name="Yeeles J.T.P."/>
            <person name="Deegan T.D."/>
        </authorList>
    </citation>
    <scope>STRUCTURE BY ELECTRON MICROSCOPY (2.80 ANGSTROMS) IN REPLISOME</scope>
    <scope>SUBUNIT</scope>
</reference>
<reference evidence="23" key="33">
    <citation type="journal article" date="2021" name="EMBO J.">
        <title>Structure of a human replisome shows the organisation and interactions of a DNA replication machine.</title>
        <authorList>
            <person name="Jones M.L."/>
            <person name="Baris Y."/>
            <person name="Taylor M.R.G."/>
            <person name="Yeeles J.T.P."/>
        </authorList>
    </citation>
    <scope>STRUCTURE BY ELECTRON MICROSCOPY (3.20 ANGSTROMS) IN REPLISOME</scope>
    <scope>SUBUNIT</scope>
</reference>
<reference key="34">
    <citation type="journal article" date="2023" name="Hum. Genet.">
        <title>De novo MCM6 variants in neurodevelopmental disorders: a recognizable phenotype related to zinc binding residues.</title>
        <authorList>
            <person name="Smits D.J."/>
            <person name="Schot R."/>
            <person name="Popescu C.A."/>
            <person name="Dias K.R."/>
            <person name="Ades L."/>
            <person name="Briere L.C."/>
            <person name="Sweetser D.A."/>
            <person name="Kushima I."/>
            <person name="Aleksic B."/>
            <person name="Khan S."/>
            <person name="Karageorgou V."/>
            <person name="Ordonez N."/>
            <person name="Sleutels F.J.G.T."/>
            <person name="van der Kaay D.C.M."/>
            <person name="Van Mol C."/>
            <person name="Van Esch H."/>
            <person name="Bertoli-Avella A.M."/>
            <person name="Roscioli T."/>
            <person name="Mancini G.M.S."/>
        </authorList>
    </citation>
    <scope>VARIANTS SER-149; TYR-158; GLY-202 AND SER-239</scope>
    <scope>CHARACTERIZATION OF VARIANT TYR-158</scope>
</reference>
<accession>Q14566</accession>
<accession>B2R6H2</accession>
<accession>Q13504</accession>
<accession>Q99859</accession>
<protein>
    <recommendedName>
        <fullName>DNA replication licensing factor MCM6</fullName>
        <ecNumber evidence="9">3.6.4.12</ecNumber>
    </recommendedName>
    <alternativeName>
        <fullName>p105MCM</fullName>
    </alternativeName>
</protein>
<name>MCM6_HUMAN</name>
<organism>
    <name type="scientific">Homo sapiens</name>
    <name type="common">Human</name>
    <dbReference type="NCBI Taxonomy" id="9606"/>
    <lineage>
        <taxon>Eukaryota</taxon>
        <taxon>Metazoa</taxon>
        <taxon>Chordata</taxon>
        <taxon>Craniata</taxon>
        <taxon>Vertebrata</taxon>
        <taxon>Euteleostomi</taxon>
        <taxon>Mammalia</taxon>
        <taxon>Eutheria</taxon>
        <taxon>Euarchontoglires</taxon>
        <taxon>Primates</taxon>
        <taxon>Haplorrhini</taxon>
        <taxon>Catarrhini</taxon>
        <taxon>Hominidae</taxon>
        <taxon>Homo</taxon>
    </lineage>
</organism>
<comment type="function">
    <text evidence="3 11 12 13 14 16">Acts as a component of the MCM2-7 complex (MCM complex) which is the replicative helicase essential for 'once per cell cycle' DNA replication initiation and elongation in eukaryotic cells. Core component of CDC45-MCM-GINS (CMG) helicase, the molecular machine that unwinds template DNA during replication, and around which the replisome is built (PubMed:16899510, PubMed:32453425, PubMed:34694004, PubMed:34700328, PubMed:35585232, PubMed:9305914). The active ATPase sites in the MCM2-7 ring are formed through the interaction surfaces of two neighboring subunits such that a critical structure of a conserved arginine finger motif is provided in trans relative to the ATP-binding site of the Walker A box of the adjacent subunit. The six ATPase active sites, however, are likely to contribute differentially to the complex helicase activity (PubMed:32453425).</text>
</comment>
<comment type="catalytic activity">
    <reaction evidence="9">
        <text>ATP + H2O = ADP + phosphate + H(+)</text>
        <dbReference type="Rhea" id="RHEA:13065"/>
        <dbReference type="ChEBI" id="CHEBI:15377"/>
        <dbReference type="ChEBI" id="CHEBI:15378"/>
        <dbReference type="ChEBI" id="CHEBI:30616"/>
        <dbReference type="ChEBI" id="CHEBI:43474"/>
        <dbReference type="ChEBI" id="CHEBI:456216"/>
        <dbReference type="EC" id="3.6.4.12"/>
    </reaction>
    <physiologicalReaction direction="left-to-right" evidence="9">
        <dbReference type="Rhea" id="RHEA:13066"/>
    </physiologicalReaction>
</comment>
<comment type="subunit">
    <text evidence="2 3 4 6 7 10 11 12 13 16">Component of the MCM2-7 complex (PubMed:16899510, PubMed:17296731, PubMed:9305914). The complex forms a toroidal hexameric ring with the proposed subunit order MCM2-MCM6-MCM4-MCM7-MCM3-MCM5 (PubMed:16899510, PubMed:17296731, PubMed:32453425, PubMed:34694004, PubMed:34700328, PubMed:9305914). Component of the CMG helicase complex, a hexameric ring of related MCM2-7 subunits stabilized by CDC45 and the tetrameric GINS complex (PubMed:32453425, PubMed:34694004, PubMed:34700328). May interact with MCM10 (PubMed:11095689). Interacts with TIPIN (PubMed:17116885). Interacts with CDT1 (PubMed:20202939). Interacts with MCMBP (PubMed:17296731). Interacts with DDI2 (PubMed:29290612).</text>
</comment>
<comment type="interaction">
    <interactant intactId="EBI-374900">
        <id>Q14566</id>
    </interactant>
    <interactant intactId="EBI-375053">
        <id>P42771</id>
        <label>CDKN2A</label>
    </interactant>
    <organismsDiffer>false</organismsDiffer>
    <experiments>4</experiments>
</comment>
<comment type="interaction">
    <interactant intactId="EBI-374900">
        <id>Q14566</id>
    </interactant>
    <interactant intactId="EBI-456953">
        <id>Q9H211</id>
        <label>CDT1</label>
    </interactant>
    <organismsDiffer>false</organismsDiffer>
    <experiments>4</experiments>
</comment>
<comment type="interaction">
    <interactant intactId="EBI-374900">
        <id>Q14566</id>
    </interactant>
    <interactant intactId="EBI-719941">
        <id>Q3B820</id>
        <label>FAM161A</label>
    </interactant>
    <organismsDiffer>false</organismsDiffer>
    <experiments>3</experiments>
</comment>
<comment type="interaction">
    <interactant intactId="EBI-374900">
        <id>Q14566</id>
    </interactant>
    <interactant intactId="EBI-374912">
        <id>Q7L590</id>
        <label>MCM10</label>
    </interactant>
    <organismsDiffer>false</organismsDiffer>
    <experiments>3</experiments>
</comment>
<comment type="interaction">
    <interactant intactId="EBI-374900">
        <id>Q14566</id>
    </interactant>
    <interactant intactId="EBI-10233517">
        <id>Q7L590-2</id>
        <label>MCM10</label>
    </interactant>
    <organismsDiffer>false</organismsDiffer>
    <experiments>4</experiments>
</comment>
<comment type="interaction">
    <interactant intactId="EBI-374900">
        <id>Q14566</id>
    </interactant>
    <interactant intactId="EBI-374819">
        <id>P49736</id>
        <label>MCM2</label>
    </interactant>
    <organismsDiffer>false</organismsDiffer>
    <experiments>18</experiments>
</comment>
<comment type="interaction">
    <interactant intactId="EBI-374900">
        <id>Q14566</id>
    </interactant>
    <interactant intactId="EBI-355153">
        <id>P25205</id>
        <label>MCM3</label>
    </interactant>
    <organismsDiffer>false</organismsDiffer>
    <experiments>5</experiments>
</comment>
<comment type="interaction">
    <interactant intactId="EBI-374900">
        <id>Q14566</id>
    </interactant>
    <interactant intactId="EBI-374900">
        <id>Q14566</id>
        <label>MCM6</label>
    </interactant>
    <organismsDiffer>false</organismsDiffer>
    <experiments>2</experiments>
</comment>
<comment type="interaction">
    <interactant intactId="EBI-374900">
        <id>Q14566</id>
    </interactant>
    <interactant intactId="EBI-355924">
        <id>P33993</id>
        <label>MCM7</label>
    </interactant>
    <organismsDiffer>false</organismsDiffer>
    <experiments>6</experiments>
</comment>
<comment type="interaction">
    <interactant intactId="EBI-374900">
        <id>Q14566</id>
    </interactant>
    <interactant intactId="EBI-749378">
        <id>Q9BTE3</id>
        <label>MCMBP</label>
    </interactant>
    <organismsDiffer>false</organismsDiffer>
    <experiments>15</experiments>
</comment>
<comment type="interaction">
    <interactant intactId="EBI-374900">
        <id>Q14566</id>
    </interactant>
    <interactant intactId="EBI-10096247">
        <id>P50583</id>
        <label>NUDT2</label>
    </interactant>
    <organismsDiffer>false</organismsDiffer>
    <experiments>3</experiments>
</comment>
<comment type="interaction">
    <interactant intactId="EBI-374900">
        <id>Q14566</id>
    </interactant>
    <interactant intactId="EBI-1053651">
        <id>P08579</id>
        <label>SNRPB2</label>
    </interactant>
    <organismsDiffer>false</organismsDiffer>
    <experiments>3</experiments>
</comment>
<comment type="interaction">
    <interactant intactId="EBI-374900">
        <id>Q14566</id>
    </interactant>
    <interactant intactId="EBI-353771">
        <id>Q08945</id>
        <label>SSRP1</label>
    </interactant>
    <organismsDiffer>false</organismsDiffer>
    <experiments>4</experiments>
</comment>
<comment type="interaction">
    <interactant intactId="EBI-374900">
        <id>Q14566</id>
    </interactant>
    <interactant intactId="EBI-954357">
        <id>Q05086</id>
        <label>UBE3A</label>
    </interactant>
    <organismsDiffer>false</organismsDiffer>
    <experiments>6</experiments>
</comment>
<comment type="interaction">
    <interactant intactId="EBI-374900">
        <id>Q14566</id>
    </interactant>
    <interactant intactId="EBI-10175863">
        <id>Q05086-2</id>
        <label>UBE3A</label>
    </interactant>
    <organismsDiffer>false</organismsDiffer>
    <experiments>3</experiments>
</comment>
<comment type="interaction">
    <interactant intactId="EBI-374900">
        <id>Q14566</id>
    </interactant>
    <interactant intactId="EBI-395708">
        <id>Q96C00</id>
        <label>ZBTB9</label>
    </interactant>
    <organismsDiffer>false</organismsDiffer>
    <experiments>3</experiments>
</comment>
<comment type="interaction">
    <interactant intactId="EBI-374900">
        <id>Q14566</id>
    </interactant>
    <interactant intactId="EBI-6248077">
        <id>Q76353</id>
    </interactant>
    <organismsDiffer>true</organismsDiffer>
    <experiments>2</experiments>
</comment>
<comment type="subcellular location">
    <subcellularLocation>
        <location evidence="3">Nucleus</location>
    </subcellularLocation>
    <subcellularLocation>
        <location evidence="3">Chromosome</location>
    </subcellularLocation>
    <text evidence="3">Binds to chromatin during G1 and detaches from it during S phase.</text>
</comment>
<comment type="PTM">
    <text evidence="8">O-glycosylated (O-GlcNAcylated), in a cell cycle-dependent manner.</text>
</comment>
<comment type="polymorphism">
    <text evidence="5">Intronic variations in MCM6 upstream from the LCT gene are associated with adult-type hypolactasia [MIM:223100] leading to lactose intolerance, or with lactase persistance. Lactose intolerance is a normal physiological phenomenon caused by developmental down-regulation of lactase activity during childhood or early adulthood. A non-coding variation in MCM6 affects the transcriptional regulation of the LCT gene resulting in down-regulation of lactase activity. However, the majority of Northern Europeans and some African populations have the ability to maintain lactase activity and digest lactose throughout life (lactase persistence).</text>
</comment>
<comment type="miscellaneous">
    <text evidence="1">Early fractionation of eukaryotic MCM proteins yielded a variety of dimeric, trimeric and tetrameric complexes with unclear biological significance. Specifically a MCM467 subcomplex is shown to have in vitro helicase activity which is inhibited by the MCM2 subunit. The MCM2-7 hexamer is the proposed physiological active complex.</text>
</comment>
<comment type="similarity">
    <text evidence="18">Belongs to the MCM family.</text>
</comment>
<dbReference type="EC" id="3.6.4.12" evidence="9"/>
<dbReference type="EMBL" id="D84557">
    <property type="protein sequence ID" value="BAA12699.1"/>
    <property type="molecule type" value="mRNA"/>
</dbReference>
<dbReference type="EMBL" id="U46838">
    <property type="protein sequence ID" value="AAC50766.1"/>
    <property type="molecule type" value="mRNA"/>
</dbReference>
<dbReference type="EMBL" id="AY220757">
    <property type="protein sequence ID" value="AAO26043.1"/>
    <property type="molecule type" value="Genomic_DNA"/>
</dbReference>
<dbReference type="EMBL" id="AK312575">
    <property type="protein sequence ID" value="BAG35469.1"/>
    <property type="molecule type" value="mRNA"/>
</dbReference>
<dbReference type="EMBL" id="CH471058">
    <property type="protein sequence ID" value="EAX11621.1"/>
    <property type="molecule type" value="Genomic_DNA"/>
</dbReference>
<dbReference type="EMBL" id="BC032374">
    <property type="protein sequence ID" value="AAH32374.1"/>
    <property type="molecule type" value="mRNA"/>
</dbReference>
<dbReference type="EMBL" id="AH005100">
    <property type="protein sequence ID" value="AAB48165.1"/>
    <property type="molecule type" value="Genomic_DNA"/>
</dbReference>
<dbReference type="CCDS" id="CCDS2179.1"/>
<dbReference type="RefSeq" id="NP_005906.2">
    <property type="nucleotide sequence ID" value="NM_005915.5"/>
</dbReference>
<dbReference type="PDB" id="2KLQ">
    <property type="method" value="NMR"/>
    <property type="chains" value="A=708-821"/>
</dbReference>
<dbReference type="PDB" id="2LE8">
    <property type="method" value="NMR"/>
    <property type="chains" value="A=708-821"/>
</dbReference>
<dbReference type="PDB" id="6XTX">
    <property type="method" value="EM"/>
    <property type="resolution" value="3.29 A"/>
    <property type="chains" value="6=1-821"/>
</dbReference>
<dbReference type="PDB" id="6XTY">
    <property type="method" value="EM"/>
    <property type="resolution" value="6.77 A"/>
    <property type="chains" value="6=1-821"/>
</dbReference>
<dbReference type="PDB" id="7PFO">
    <property type="method" value="EM"/>
    <property type="resolution" value="3.20 A"/>
    <property type="chains" value="6=1-821"/>
</dbReference>
<dbReference type="PDB" id="7PLO">
    <property type="method" value="EM"/>
    <property type="resolution" value="2.80 A"/>
    <property type="chains" value="6=1-821"/>
</dbReference>
<dbReference type="PDB" id="7W1Y">
    <property type="method" value="EM"/>
    <property type="resolution" value="2.59 A"/>
    <property type="chains" value="6/E=1-821"/>
</dbReference>
<dbReference type="PDB" id="7W68">
    <property type="method" value="EM"/>
    <property type="resolution" value="4.40 A"/>
    <property type="chains" value="E=1-821"/>
</dbReference>
<dbReference type="PDB" id="8B9D">
    <property type="method" value="EM"/>
    <property type="resolution" value="3.40 A"/>
    <property type="chains" value="6=1-821"/>
</dbReference>
<dbReference type="PDB" id="8RWV">
    <property type="method" value="EM"/>
    <property type="resolution" value="6.68 A"/>
    <property type="chains" value="6=1-821"/>
</dbReference>
<dbReference type="PDB" id="8S09">
    <property type="method" value="EM"/>
    <property type="resolution" value="3.10 A"/>
    <property type="chains" value="6/E=1-821"/>
</dbReference>
<dbReference type="PDB" id="8S0A">
    <property type="method" value="EM"/>
    <property type="resolution" value="3.20 A"/>
    <property type="chains" value="6=1-821"/>
</dbReference>
<dbReference type="PDB" id="8S0B">
    <property type="method" value="EM"/>
    <property type="resolution" value="3.60 A"/>
    <property type="chains" value="6=1-821"/>
</dbReference>
<dbReference type="PDB" id="8S0D">
    <property type="method" value="EM"/>
    <property type="resolution" value="3.60 A"/>
    <property type="chains" value="6=1-821"/>
</dbReference>
<dbReference type="PDB" id="8S0E">
    <property type="method" value="EM"/>
    <property type="resolution" value="3.80 A"/>
    <property type="chains" value="6=1-821"/>
</dbReference>
<dbReference type="PDB" id="8S0F">
    <property type="method" value="EM"/>
    <property type="resolution" value="4.10 A"/>
    <property type="chains" value="6=1-821"/>
</dbReference>
<dbReference type="PDB" id="8W0E">
    <property type="method" value="EM"/>
    <property type="resolution" value="3.40 A"/>
    <property type="chains" value="6=1-821"/>
</dbReference>
<dbReference type="PDB" id="8W0F">
    <property type="method" value="EM"/>
    <property type="resolution" value="2.80 A"/>
    <property type="chains" value="6/E=1-821"/>
</dbReference>
<dbReference type="PDB" id="8W0G">
    <property type="method" value="EM"/>
    <property type="resolution" value="3.80 A"/>
    <property type="chains" value="6/E=1-821"/>
</dbReference>
<dbReference type="PDB" id="8W0I">
    <property type="method" value="EM"/>
    <property type="resolution" value="3.50 A"/>
    <property type="chains" value="6=1-821"/>
</dbReference>
<dbReference type="PDB" id="9CAQ">
    <property type="method" value="EM"/>
    <property type="resolution" value="3.20 A"/>
    <property type="chains" value="6/E=1-821"/>
</dbReference>
<dbReference type="PDBsum" id="2KLQ"/>
<dbReference type="PDBsum" id="2LE8"/>
<dbReference type="PDBsum" id="6XTX"/>
<dbReference type="PDBsum" id="6XTY"/>
<dbReference type="PDBsum" id="7PFO"/>
<dbReference type="PDBsum" id="7PLO"/>
<dbReference type="PDBsum" id="7W1Y"/>
<dbReference type="PDBsum" id="7W68"/>
<dbReference type="PDBsum" id="8B9D"/>
<dbReference type="PDBsum" id="8RWV"/>
<dbReference type="PDBsum" id="8S09"/>
<dbReference type="PDBsum" id="8S0A"/>
<dbReference type="PDBsum" id="8S0B"/>
<dbReference type="PDBsum" id="8S0D"/>
<dbReference type="PDBsum" id="8S0E"/>
<dbReference type="PDBsum" id="8S0F"/>
<dbReference type="PDBsum" id="8W0E"/>
<dbReference type="PDBsum" id="8W0F"/>
<dbReference type="PDBsum" id="8W0G"/>
<dbReference type="PDBsum" id="8W0I"/>
<dbReference type="PDBsum" id="9CAQ"/>
<dbReference type="BMRB" id="Q14566"/>
<dbReference type="EMDB" id="EMD-10619"/>
<dbReference type="EMDB" id="EMD-10621"/>
<dbReference type="EMDB" id="EMD-13375"/>
<dbReference type="EMDB" id="EMD-13494"/>
<dbReference type="EMDB" id="EMD-19566"/>
<dbReference type="EMDB" id="EMD-19618"/>
<dbReference type="EMDB" id="EMD-19619"/>
<dbReference type="EMDB" id="EMD-19620"/>
<dbReference type="EMDB" id="EMD-19622"/>
<dbReference type="EMDB" id="EMD-19623"/>
<dbReference type="EMDB" id="EMD-19624"/>
<dbReference type="EMDB" id="EMD-32258"/>
<dbReference type="EMDB" id="EMD-32326"/>
<dbReference type="EMDB" id="EMD-43707"/>
<dbReference type="EMDB" id="EMD-43708"/>
<dbReference type="EMDB" id="EMD-43709"/>
<dbReference type="EMDB" id="EMD-43710"/>
<dbReference type="EMDB" id="EMD-45400"/>
<dbReference type="SMR" id="Q14566"/>
<dbReference type="BioGRID" id="110343">
    <property type="interactions" value="297"/>
</dbReference>
<dbReference type="ComplexPortal" id="CPX-2940">
    <property type="entry name" value="MCM complex"/>
</dbReference>
<dbReference type="CORUM" id="Q14566"/>
<dbReference type="DIP" id="DIP-31727N"/>
<dbReference type="FunCoup" id="Q14566">
    <property type="interactions" value="2150"/>
</dbReference>
<dbReference type="IntAct" id="Q14566">
    <property type="interactions" value="94"/>
</dbReference>
<dbReference type="MINT" id="Q14566"/>
<dbReference type="STRING" id="9606.ENSP00000264156"/>
<dbReference type="ChEMBL" id="CHEMBL4296011"/>
<dbReference type="GlyGen" id="Q14566">
    <property type="glycosylation" value="3 sites, 1 O-linked glycan (3 sites)"/>
</dbReference>
<dbReference type="iPTMnet" id="Q14566"/>
<dbReference type="MetOSite" id="Q14566"/>
<dbReference type="PhosphoSitePlus" id="Q14566"/>
<dbReference type="SwissPalm" id="Q14566"/>
<dbReference type="BioMuta" id="MCM6"/>
<dbReference type="DMDM" id="2497824"/>
<dbReference type="CPTAC" id="CPTAC-5918"/>
<dbReference type="CPTAC" id="CPTAC-5919"/>
<dbReference type="jPOST" id="Q14566"/>
<dbReference type="MassIVE" id="Q14566"/>
<dbReference type="PaxDb" id="9606-ENSP00000264156"/>
<dbReference type="PeptideAtlas" id="Q14566"/>
<dbReference type="ProteomicsDB" id="60047"/>
<dbReference type="Pumba" id="Q14566"/>
<dbReference type="Antibodypedia" id="1416">
    <property type="antibodies" value="384 antibodies from 35 providers"/>
</dbReference>
<dbReference type="CPTC" id="Q14566">
    <property type="antibodies" value="1 antibody"/>
</dbReference>
<dbReference type="DNASU" id="4175"/>
<dbReference type="Ensembl" id="ENST00000264156.3">
    <property type="protein sequence ID" value="ENSP00000264156.2"/>
    <property type="gene ID" value="ENSG00000076003.5"/>
</dbReference>
<dbReference type="GeneID" id="4175"/>
<dbReference type="KEGG" id="hsa:4175"/>
<dbReference type="MANE-Select" id="ENST00000264156.3">
    <property type="protein sequence ID" value="ENSP00000264156.2"/>
    <property type="RefSeq nucleotide sequence ID" value="NM_005915.6"/>
    <property type="RefSeq protein sequence ID" value="NP_005906.2"/>
</dbReference>
<dbReference type="UCSC" id="uc002tuw.5">
    <property type="organism name" value="human"/>
</dbReference>
<dbReference type="AGR" id="HGNC:6949"/>
<dbReference type="CTD" id="4175"/>
<dbReference type="DisGeNET" id="4175"/>
<dbReference type="GeneCards" id="MCM6"/>
<dbReference type="HGNC" id="HGNC:6949">
    <property type="gene designation" value="MCM6"/>
</dbReference>
<dbReference type="HPA" id="ENSG00000076003">
    <property type="expression patterns" value="Tissue enhanced (lymphoid)"/>
</dbReference>
<dbReference type="MalaCards" id="MCM6"/>
<dbReference type="MIM" id="223100">
    <property type="type" value="phenotype"/>
</dbReference>
<dbReference type="MIM" id="601806">
    <property type="type" value="gene"/>
</dbReference>
<dbReference type="neXtProt" id="NX_Q14566"/>
<dbReference type="OpenTargets" id="ENSG00000076003"/>
<dbReference type="PharmGKB" id="PA30696"/>
<dbReference type="VEuPathDB" id="HostDB:ENSG00000076003"/>
<dbReference type="eggNOG" id="KOG0480">
    <property type="taxonomic scope" value="Eukaryota"/>
</dbReference>
<dbReference type="GeneTree" id="ENSGT01050000244824"/>
<dbReference type="HOGENOM" id="CLU_000995_3_2_1"/>
<dbReference type="InParanoid" id="Q14566"/>
<dbReference type="OMA" id="RHQQTDK"/>
<dbReference type="OrthoDB" id="1744952at2759"/>
<dbReference type="PAN-GO" id="Q14566">
    <property type="GO annotations" value="7 GO annotations based on evolutionary models"/>
</dbReference>
<dbReference type="PhylomeDB" id="Q14566"/>
<dbReference type="TreeFam" id="TF105646"/>
<dbReference type="PathwayCommons" id="Q14566"/>
<dbReference type="Reactome" id="R-HSA-176187">
    <property type="pathway name" value="Activation of ATR in response to replication stress"/>
</dbReference>
<dbReference type="Reactome" id="R-HSA-176974">
    <property type="pathway name" value="Unwinding of DNA"/>
</dbReference>
<dbReference type="Reactome" id="R-HSA-68867">
    <property type="pathway name" value="Assembly of the pre-replicative complex"/>
</dbReference>
<dbReference type="Reactome" id="R-HSA-68949">
    <property type="pathway name" value="Orc1 removal from chromatin"/>
</dbReference>
<dbReference type="Reactome" id="R-HSA-68962">
    <property type="pathway name" value="Activation of the pre-replicative complex"/>
</dbReference>
<dbReference type="Reactome" id="R-HSA-69052">
    <property type="pathway name" value="Switching of origins to a post-replicative state"/>
</dbReference>
<dbReference type="SignaLink" id="Q14566"/>
<dbReference type="SIGNOR" id="Q14566"/>
<dbReference type="BioGRID-ORCS" id="4175">
    <property type="hits" value="787 hits in 1172 CRISPR screens"/>
</dbReference>
<dbReference type="CD-CODE" id="91857CE7">
    <property type="entry name" value="Nucleolus"/>
</dbReference>
<dbReference type="ChiTaRS" id="MCM6">
    <property type="organism name" value="human"/>
</dbReference>
<dbReference type="EvolutionaryTrace" id="Q14566"/>
<dbReference type="GeneWiki" id="MCM6"/>
<dbReference type="GenomeRNAi" id="4175"/>
<dbReference type="Pharos" id="Q14566">
    <property type="development level" value="Tbio"/>
</dbReference>
<dbReference type="PRO" id="PR:Q14566"/>
<dbReference type="Proteomes" id="UP000005640">
    <property type="component" value="Chromosome 2"/>
</dbReference>
<dbReference type="RNAct" id="Q14566">
    <property type="molecule type" value="protein"/>
</dbReference>
<dbReference type="Bgee" id="ENSG00000076003">
    <property type="expression patterns" value="Expressed in ventricular zone and 205 other cell types or tissues"/>
</dbReference>
<dbReference type="GO" id="GO:0000781">
    <property type="term" value="C:chromosome, telomeric region"/>
    <property type="evidence" value="ECO:0007005"/>
    <property type="project" value="BHF-UCL"/>
</dbReference>
<dbReference type="GO" id="GO:0071162">
    <property type="term" value="C:CMG complex"/>
    <property type="evidence" value="ECO:0000353"/>
    <property type="project" value="ComplexPortal"/>
</dbReference>
<dbReference type="GO" id="GO:0005829">
    <property type="term" value="C:cytosol"/>
    <property type="evidence" value="ECO:0000314"/>
    <property type="project" value="HPA"/>
</dbReference>
<dbReference type="GO" id="GO:0042555">
    <property type="term" value="C:MCM complex"/>
    <property type="evidence" value="ECO:0000314"/>
    <property type="project" value="UniProtKB"/>
</dbReference>
<dbReference type="GO" id="GO:0005654">
    <property type="term" value="C:nucleoplasm"/>
    <property type="evidence" value="ECO:0000314"/>
    <property type="project" value="HPA"/>
</dbReference>
<dbReference type="GO" id="GO:0005634">
    <property type="term" value="C:nucleus"/>
    <property type="evidence" value="ECO:0000314"/>
    <property type="project" value="UniProtKB"/>
</dbReference>
<dbReference type="GO" id="GO:0005524">
    <property type="term" value="F:ATP binding"/>
    <property type="evidence" value="ECO:0000303"/>
    <property type="project" value="UniProtKB"/>
</dbReference>
<dbReference type="GO" id="GO:0016887">
    <property type="term" value="F:ATP hydrolysis activity"/>
    <property type="evidence" value="ECO:0007669"/>
    <property type="project" value="RHEA"/>
</dbReference>
<dbReference type="GO" id="GO:0003678">
    <property type="term" value="F:DNA helicase activity"/>
    <property type="evidence" value="ECO:0007669"/>
    <property type="project" value="Ensembl"/>
</dbReference>
<dbReference type="GO" id="GO:0042802">
    <property type="term" value="F:identical protein binding"/>
    <property type="evidence" value="ECO:0000353"/>
    <property type="project" value="IntAct"/>
</dbReference>
<dbReference type="GO" id="GO:0003697">
    <property type="term" value="F:single-stranded DNA binding"/>
    <property type="evidence" value="ECO:0007669"/>
    <property type="project" value="Ensembl"/>
</dbReference>
<dbReference type="GO" id="GO:0006260">
    <property type="term" value="P:DNA replication"/>
    <property type="evidence" value="ECO:0000318"/>
    <property type="project" value="GO_Central"/>
</dbReference>
<dbReference type="GO" id="GO:0006270">
    <property type="term" value="P:DNA replication initiation"/>
    <property type="evidence" value="ECO:0007669"/>
    <property type="project" value="InterPro"/>
</dbReference>
<dbReference type="GO" id="GO:0000727">
    <property type="term" value="P:double-strand break repair via break-induced replication"/>
    <property type="evidence" value="ECO:0000318"/>
    <property type="project" value="GO_Central"/>
</dbReference>
<dbReference type="GO" id="GO:1902969">
    <property type="term" value="P:mitotic DNA replication"/>
    <property type="evidence" value="ECO:0000318"/>
    <property type="project" value="GO_Central"/>
</dbReference>
<dbReference type="GO" id="GO:0030174">
    <property type="term" value="P:regulation of DNA-templated DNA replication initiation"/>
    <property type="evidence" value="ECO:0000303"/>
    <property type="project" value="ComplexPortal"/>
</dbReference>
<dbReference type="CDD" id="cd17757">
    <property type="entry name" value="MCM6"/>
    <property type="match status" value="1"/>
</dbReference>
<dbReference type="FunFam" id="1.20.58.870:FF:000001">
    <property type="entry name" value="DNA helicase"/>
    <property type="match status" value="1"/>
</dbReference>
<dbReference type="FunFam" id="2.20.28.10:FF:000003">
    <property type="entry name" value="DNA helicase"/>
    <property type="match status" value="1"/>
</dbReference>
<dbReference type="FunFam" id="2.40.50.140:FF:000091">
    <property type="entry name" value="DNA helicase"/>
    <property type="match status" value="1"/>
</dbReference>
<dbReference type="FunFam" id="3.30.1640.10:FF:000004">
    <property type="entry name" value="DNA helicase"/>
    <property type="match status" value="1"/>
</dbReference>
<dbReference type="FunFam" id="3.40.50.300:FF:000115">
    <property type="entry name" value="DNA helicase"/>
    <property type="match status" value="1"/>
</dbReference>
<dbReference type="Gene3D" id="1.20.58.870">
    <property type="match status" value="1"/>
</dbReference>
<dbReference type="Gene3D" id="2.20.28.10">
    <property type="match status" value="1"/>
</dbReference>
<dbReference type="Gene3D" id="3.30.1640.10">
    <property type="entry name" value="mini-chromosome maintenance (MCM) complex, chain A, domain 1"/>
    <property type="match status" value="1"/>
</dbReference>
<dbReference type="Gene3D" id="2.40.50.140">
    <property type="entry name" value="Nucleic acid-binding proteins"/>
    <property type="match status" value="1"/>
</dbReference>
<dbReference type="Gene3D" id="3.40.50.300">
    <property type="entry name" value="P-loop containing nucleotide triphosphate hydrolases"/>
    <property type="match status" value="1"/>
</dbReference>
<dbReference type="InterPro" id="IPR031327">
    <property type="entry name" value="MCM"/>
</dbReference>
<dbReference type="InterPro" id="IPR008049">
    <property type="entry name" value="MCM6"/>
</dbReference>
<dbReference type="InterPro" id="IPR041024">
    <property type="entry name" value="Mcm6_C"/>
</dbReference>
<dbReference type="InterPro" id="IPR018525">
    <property type="entry name" value="MCM_CS"/>
</dbReference>
<dbReference type="InterPro" id="IPR001208">
    <property type="entry name" value="MCM_dom"/>
</dbReference>
<dbReference type="InterPro" id="IPR041562">
    <property type="entry name" value="MCM_lid"/>
</dbReference>
<dbReference type="InterPro" id="IPR027925">
    <property type="entry name" value="MCM_N"/>
</dbReference>
<dbReference type="InterPro" id="IPR033762">
    <property type="entry name" value="MCM_OB"/>
</dbReference>
<dbReference type="InterPro" id="IPR012340">
    <property type="entry name" value="NA-bd_OB-fold"/>
</dbReference>
<dbReference type="InterPro" id="IPR027417">
    <property type="entry name" value="P-loop_NTPase"/>
</dbReference>
<dbReference type="PANTHER" id="PTHR11630">
    <property type="entry name" value="DNA REPLICATION LICENSING FACTOR MCM FAMILY MEMBER"/>
    <property type="match status" value="1"/>
</dbReference>
<dbReference type="PANTHER" id="PTHR11630:SF73">
    <property type="entry name" value="DNA REPLICATION LICENSING FACTOR MCM6"/>
    <property type="match status" value="1"/>
</dbReference>
<dbReference type="Pfam" id="PF00493">
    <property type="entry name" value="MCM"/>
    <property type="match status" value="1"/>
</dbReference>
<dbReference type="Pfam" id="PF18263">
    <property type="entry name" value="MCM6_C"/>
    <property type="match status" value="1"/>
</dbReference>
<dbReference type="Pfam" id="PF17855">
    <property type="entry name" value="MCM_lid"/>
    <property type="match status" value="1"/>
</dbReference>
<dbReference type="Pfam" id="PF14551">
    <property type="entry name" value="MCM_N"/>
    <property type="match status" value="1"/>
</dbReference>
<dbReference type="Pfam" id="PF17207">
    <property type="entry name" value="MCM_OB"/>
    <property type="match status" value="1"/>
</dbReference>
<dbReference type="PRINTS" id="PR01657">
    <property type="entry name" value="MCMFAMILY"/>
</dbReference>
<dbReference type="PRINTS" id="PR01662">
    <property type="entry name" value="MCMPROTEIN6"/>
</dbReference>
<dbReference type="SMART" id="SM00350">
    <property type="entry name" value="MCM"/>
    <property type="match status" value="1"/>
</dbReference>
<dbReference type="SUPFAM" id="SSF50249">
    <property type="entry name" value="Nucleic acid-binding proteins"/>
    <property type="match status" value="1"/>
</dbReference>
<dbReference type="SUPFAM" id="SSF52540">
    <property type="entry name" value="P-loop containing nucleoside triphosphate hydrolases"/>
    <property type="match status" value="1"/>
</dbReference>
<dbReference type="PROSITE" id="PS00847">
    <property type="entry name" value="MCM_1"/>
    <property type="match status" value="1"/>
</dbReference>
<dbReference type="PROSITE" id="PS50051">
    <property type="entry name" value="MCM_2"/>
    <property type="match status" value="1"/>
</dbReference>
<proteinExistence type="evidence at protein level"/>
<sequence>MDLAAAAEPGAGSQHLEVRDEVAEKCQKLFLDFLEEFQSSDGEIKYLQLAEELIRPERNTLVVSFVDLEQFNQQLSTTIQEEFYRVYPYLCRALKTFVKDRKEIPLAKDFYVAFQDLPTRHKIRELTSSRIGLLTRISGQVVRTHPVHPELVSGTFLCLDCQTVIRDVEQQFKYTQPNICRNPVCANRRRFLLDTNKSRFVDFQKVRIQETQAELPRGSIPRSLEVILRAEAVESAQAGDKCDFTGTLIVVPDVSKLSTPGARAETNSRVSGVDGYETEGIRGLRALGVRDLSYRLVFLACCVAPTNPRFGGKELRDEEQTAESIKNQMTVKEWEKVFEMSQDKNLYHNLCTSLFPTIHGNDEVKRGVLLMLFGGVPKTTGEGTSLRGDINVCIVGDPSTAKSQFLKHVEEFSPRAVYTSGKASSAAGLTAAVVRDEESHEFVIEAGALMLADNGVCCIDEFDKMDVRDQVAIHEAMEQQTISITKAGVKATLNARTSILAAANPISGHYDRSKSLKQNINLSAPIMSRFDLFFILVDECNEVTDYAIARRIVDLHSRIEESIDRVYSLDDIRRYLLFARQFKPKISKESEDFIVEQYKHLRQRDGSGVTKSSWRITVRQLESMIRLSEAMARMHCCDEVQPKHVKEAFRLLNKSIIRVETPDVNLDQEEEIQMEVDEGAGGINGHADSPAPVNGINGYNEDINQESAPKASLRLGFSEYCRISNLIVLHLRKVEEEEDESALKRSELVNWYLKEIESEIDSEEELINKKRIIEKVIHRLTHYDHVLIELTQAGLKGSTEGSESYEEDPYLVVNPNYLLED</sequence>
<evidence type="ECO:0000250" key="1">
    <source>
        <dbReference type="UniProtKB" id="P97311"/>
    </source>
</evidence>
<evidence type="ECO:0000269" key="2">
    <source>
    </source>
</evidence>
<evidence type="ECO:0000269" key="3">
    <source>
    </source>
</evidence>
<evidence type="ECO:0000269" key="4">
    <source>
    </source>
</evidence>
<evidence type="ECO:0000269" key="5">
    <source>
    </source>
</evidence>
<evidence type="ECO:0000269" key="6">
    <source>
    </source>
</evidence>
<evidence type="ECO:0000269" key="7">
    <source>
    </source>
</evidence>
<evidence type="ECO:0000269" key="8">
    <source>
    </source>
</evidence>
<evidence type="ECO:0000269" key="9">
    <source>
    </source>
</evidence>
<evidence type="ECO:0000269" key="10">
    <source>
    </source>
</evidence>
<evidence type="ECO:0000269" key="11">
    <source>
    </source>
</evidence>
<evidence type="ECO:0000269" key="12">
    <source>
    </source>
</evidence>
<evidence type="ECO:0000269" key="13">
    <source>
    </source>
</evidence>
<evidence type="ECO:0000269" key="14">
    <source>
    </source>
</evidence>
<evidence type="ECO:0000269" key="15">
    <source>
    </source>
</evidence>
<evidence type="ECO:0000269" key="16">
    <source>
    </source>
</evidence>
<evidence type="ECO:0000269" key="17">
    <source ref="3"/>
</evidence>
<evidence type="ECO:0000305" key="18"/>
<evidence type="ECO:0000305" key="19">
    <source>
    </source>
</evidence>
<evidence type="ECO:0000312" key="20">
    <source>
        <dbReference type="HGNC" id="HGNC:6949"/>
    </source>
</evidence>
<evidence type="ECO:0007744" key="21">
    <source>
        <dbReference type="PDB" id="6XTX"/>
    </source>
</evidence>
<evidence type="ECO:0007744" key="22">
    <source>
        <dbReference type="PDB" id="6XTY"/>
    </source>
</evidence>
<evidence type="ECO:0007744" key="23">
    <source>
        <dbReference type="PDB" id="7PFO"/>
    </source>
</evidence>
<evidence type="ECO:0007744" key="24">
    <source>
        <dbReference type="PDB" id="7PLO"/>
    </source>
</evidence>
<evidence type="ECO:0007744" key="25">
    <source>
    </source>
</evidence>
<evidence type="ECO:0007744" key="26">
    <source>
    </source>
</evidence>
<evidence type="ECO:0007744" key="27">
    <source>
    </source>
</evidence>
<evidence type="ECO:0007744" key="28">
    <source>
    </source>
</evidence>
<evidence type="ECO:0007744" key="29">
    <source>
    </source>
</evidence>
<evidence type="ECO:0007744" key="30">
    <source>
    </source>
</evidence>
<evidence type="ECO:0007744" key="31">
    <source>
    </source>
</evidence>
<evidence type="ECO:0007744" key="32">
    <source>
    </source>
</evidence>
<evidence type="ECO:0007744" key="33">
    <source>
    </source>
</evidence>
<evidence type="ECO:0007829" key="34">
    <source>
        <dbReference type="PDB" id="2KLQ"/>
    </source>
</evidence>
<evidence type="ECO:0007829" key="35">
    <source>
        <dbReference type="PDB" id="2LE8"/>
    </source>
</evidence>
<evidence type="ECO:0007829" key="36">
    <source>
        <dbReference type="PDB" id="8S09"/>
    </source>
</evidence>
<keyword id="KW-0002">3D-structure</keyword>
<keyword id="KW-0007">Acetylation</keyword>
<keyword id="KW-0067">ATP-binding</keyword>
<keyword id="KW-0131">Cell cycle</keyword>
<keyword id="KW-0158">Chromosome</keyword>
<keyword id="KW-0235">DNA replication</keyword>
<keyword id="KW-0238">DNA-binding</keyword>
<keyword id="KW-0325">Glycoprotein</keyword>
<keyword id="KW-0347">Helicase</keyword>
<keyword id="KW-0378">Hydrolase</keyword>
<keyword id="KW-0547">Nucleotide-binding</keyword>
<keyword id="KW-0539">Nucleus</keyword>
<keyword id="KW-0597">Phosphoprotein</keyword>
<keyword id="KW-1267">Proteomics identification</keyword>
<keyword id="KW-1185">Reference proteome</keyword>
<feature type="chain" id="PRO_0000194113" description="DNA replication licensing factor MCM6">
    <location>
        <begin position="1"/>
        <end position="821"/>
    </location>
</feature>
<feature type="domain" description="MCM">
    <location>
        <begin position="346"/>
        <end position="553"/>
    </location>
</feature>
<feature type="short sequence motif" description="Arginine finger">
    <location>
        <begin position="528"/>
        <end position="531"/>
    </location>
</feature>
<feature type="binding site" evidence="19 21">
    <location>
        <position position="359"/>
    </location>
    <ligand>
        <name>ATP</name>
        <dbReference type="ChEBI" id="CHEBI:30616"/>
        <note>ligand shared with MCM4</note>
    </ligand>
</feature>
<feature type="binding site" evidence="19 21">
    <location>
        <position position="399"/>
    </location>
    <ligand>
        <name>ATP</name>
        <dbReference type="ChEBI" id="CHEBI:30616"/>
        <note>ligand shared with MCM4</note>
    </ligand>
</feature>
<feature type="binding site" evidence="19 21">
    <location>
        <position position="400"/>
    </location>
    <ligand>
        <name>ATP</name>
        <dbReference type="ChEBI" id="CHEBI:30616"/>
        <note>ligand shared with MCM4</note>
    </ligand>
</feature>
<feature type="binding site" evidence="19 21">
    <location>
        <position position="401"/>
    </location>
    <ligand>
        <name>ATP</name>
        <dbReference type="ChEBI" id="CHEBI:30616"/>
        <note>ligand shared with MCM4</note>
    </ligand>
</feature>
<feature type="binding site" evidence="19 21">
    <location>
        <position position="402"/>
    </location>
    <ligand>
        <name>ATP</name>
        <dbReference type="ChEBI" id="CHEBI:30616"/>
        <note>ligand shared with MCM4</note>
    </ligand>
</feature>
<feature type="binding site" evidence="19 21">
    <location>
        <position position="403"/>
    </location>
    <ligand>
        <name>ATP</name>
        <dbReference type="ChEBI" id="CHEBI:30616"/>
        <note>ligand shared with MCM4</note>
    </ligand>
</feature>
<feature type="binding site" evidence="19 21">
    <location>
        <position position="504"/>
    </location>
    <ligand>
        <name>ATP</name>
        <dbReference type="ChEBI" id="CHEBI:30616"/>
        <note>ligand shared with MCM4</note>
    </ligand>
</feature>
<feature type="binding site" evidence="19 21">
    <location>
        <position position="619"/>
    </location>
    <ligand>
        <name>ADP</name>
        <dbReference type="ChEBI" id="CHEBI:456216"/>
        <note>ligand shared with MCM2</note>
    </ligand>
</feature>
<feature type="binding site" evidence="19 21">
    <location>
        <position position="622"/>
    </location>
    <ligand>
        <name>ADP</name>
        <dbReference type="ChEBI" id="CHEBI:456216"/>
        <note>ligand shared with MCM2</note>
    </ligand>
</feature>
<feature type="modified residue" description="N-acetylmethionine" evidence="28 30 31 32">
    <location>
        <position position="1"/>
    </location>
</feature>
<feature type="modified residue" description="Phosphoserine" evidence="30 33">
    <location>
        <position position="13"/>
    </location>
</feature>
<feature type="modified residue" description="Phosphoserine" evidence="33">
    <location>
        <position position="219"/>
    </location>
</feature>
<feature type="modified residue" description="Phosphoserine" evidence="25 27 29 30 33">
    <location>
        <position position="271"/>
    </location>
</feature>
<feature type="modified residue" description="Phosphothreonine" evidence="33">
    <location>
        <position position="278"/>
    </location>
</feature>
<feature type="modified residue" description="N6-acetyllysine" evidence="1">
    <location>
        <position position="643"/>
    </location>
</feature>
<feature type="modified residue" description="Phosphoserine" evidence="1">
    <location>
        <position position="689"/>
    </location>
</feature>
<feature type="modified residue" description="Phosphoserine" evidence="25 27 29 30 33">
    <location>
        <position position="762"/>
    </location>
</feature>
<feature type="modified residue" description="Phosphothreonine" evidence="26">
    <location>
        <position position="791"/>
    </location>
</feature>
<feature type="sequence variant" id="VAR_014816" description="In dbSNP:rs796879083.">
    <original>E</original>
    <variation>V</variation>
    <location>
        <position position="35"/>
    </location>
</feature>
<feature type="sequence variant" id="VAR_088369" description="Found in a patient with mild developmental delay and autism spectrum disorder; uncertain significance; dbSNP:rs774059991." evidence="15">
    <original>P</original>
    <variation>S</variation>
    <location>
        <position position="149"/>
    </location>
</feature>
<feature type="sequence variant" id="VAR_088370" description="Found in patients with microcephaly, developmental delay, typical facial characteristics, endocrine disorders, feeding difficulties and urogenital anomalies; uncertain significance; impairs cell proliferation and ciliogenesis." evidence="15">
    <original>C</original>
    <variation>Y</variation>
    <location>
        <position position="158"/>
    </location>
</feature>
<feature type="sequence variant" id="VAR_088371" description="Found in a patient with intra-uterine growth restriction, developmental delay and autism spectrum disorder; uncertain significance." evidence="15">
    <original>D</original>
    <variation>G</variation>
    <location>
        <position position="202"/>
    </location>
</feature>
<feature type="sequence variant" id="VAR_088372" description="Found in a patient with endocrine disorders, developmental regression, autism spectrum disorder and epilepsy; uncertain significance." evidence="15">
    <original>G</original>
    <variation>S</variation>
    <location>
        <position position="239"/>
    </location>
</feature>
<feature type="sequence variant" id="VAR_016340" description="In dbSNP:rs4988283." evidence="17">
    <original>E</original>
    <variation>K</variation>
    <location>
        <position position="806"/>
    </location>
</feature>
<feature type="mutagenesis site" description="Impairs interaction with CTD1." evidence="7">
    <original>E</original>
    <variation>A</variation>
    <variation>D</variation>
    <location>
        <position position="757"/>
    </location>
</feature>
<feature type="mutagenesis site" description="Impairs interaction with CTD1." evidence="7">
    <original>E</original>
    <variation>A</variation>
    <variation>D</variation>
    <location>
        <position position="763"/>
    </location>
</feature>
<feature type="mutagenesis site" description="Impairs interaction with CTD1." evidence="7">
    <original>L</original>
    <variation>A</variation>
    <location>
        <position position="766"/>
    </location>
</feature>
<feature type="sequence conflict" description="In Ref. 2; AAC50766." evidence="18" ref="2">
    <original>PKTTGEGTSLR</original>
    <variation>SKDNRRRDLSS</variation>
    <location>
        <begin position="377"/>
        <end position="387"/>
    </location>
</feature>
<feature type="sequence conflict" description="In Ref. 2; AAC50766." evidence="18" ref="2">
    <original>A</original>
    <variation>T</variation>
    <location>
        <position position="495"/>
    </location>
</feature>
<feature type="sequence conflict" description="In Ref. 7; AAB48165." evidence="18" ref="7">
    <location>
        <position position="738"/>
    </location>
</feature>
<feature type="sequence conflict" description="In Ref. 2; AAC50766." evidence="18" ref="2">
    <original>L</original>
    <variation>P</variation>
    <location>
        <position position="790"/>
    </location>
</feature>
<feature type="helix" evidence="36">
    <location>
        <begin position="21"/>
        <end position="36"/>
    </location>
</feature>
<feature type="helix" evidence="36">
    <location>
        <begin position="45"/>
        <end position="52"/>
    </location>
</feature>
<feature type="strand" evidence="36">
    <location>
        <begin position="60"/>
        <end position="63"/>
    </location>
</feature>
<feature type="helix" evidence="36">
    <location>
        <begin position="65"/>
        <end position="71"/>
    </location>
</feature>
<feature type="helix" evidence="36">
    <location>
        <begin position="73"/>
        <end position="81"/>
    </location>
</feature>
<feature type="helix" evidence="36">
    <location>
        <begin position="83"/>
        <end position="101"/>
    </location>
</feature>
<feature type="strand" evidence="36">
    <location>
        <begin position="111"/>
        <end position="114"/>
    </location>
</feature>
<feature type="turn" evidence="36">
    <location>
        <begin position="123"/>
        <end position="125"/>
    </location>
</feature>
<feature type="helix" evidence="36">
    <location>
        <begin position="128"/>
        <end position="130"/>
    </location>
</feature>
<feature type="strand" evidence="36">
    <location>
        <begin position="133"/>
        <end position="144"/>
    </location>
</feature>
<feature type="strand" evidence="36">
    <location>
        <begin position="148"/>
        <end position="158"/>
    </location>
</feature>
<feature type="turn" evidence="36">
    <location>
        <begin position="159"/>
        <end position="161"/>
    </location>
</feature>
<feature type="strand" evidence="36">
    <location>
        <begin position="164"/>
        <end position="169"/>
    </location>
</feature>
<feature type="turn" evidence="36">
    <location>
        <begin position="183"/>
        <end position="185"/>
    </location>
</feature>
<feature type="strand" evidence="36">
    <location>
        <begin position="191"/>
        <end position="193"/>
    </location>
</feature>
<feature type="helix" evidence="36">
    <location>
        <begin position="195"/>
        <end position="197"/>
    </location>
</feature>
<feature type="strand" evidence="36">
    <location>
        <begin position="200"/>
        <end position="209"/>
    </location>
</feature>
<feature type="helix" evidence="36">
    <location>
        <begin position="212"/>
        <end position="214"/>
    </location>
</feature>
<feature type="strand" evidence="36">
    <location>
        <begin position="223"/>
        <end position="229"/>
    </location>
</feature>
<feature type="helix" evidence="36">
    <location>
        <begin position="230"/>
        <end position="233"/>
    </location>
</feature>
<feature type="strand" evidence="36">
    <location>
        <begin position="241"/>
        <end position="252"/>
    </location>
</feature>
<feature type="strand" evidence="36">
    <location>
        <begin position="263"/>
        <end position="266"/>
    </location>
</feature>
<feature type="helix" evidence="36">
    <location>
        <begin position="280"/>
        <end position="286"/>
    </location>
</feature>
<feature type="strand" evidence="36">
    <location>
        <begin position="294"/>
        <end position="306"/>
    </location>
</feature>
<feature type="helix" evidence="36">
    <location>
        <begin position="322"/>
        <end position="328"/>
    </location>
</feature>
<feature type="helix" evidence="36">
    <location>
        <begin position="331"/>
        <end position="341"/>
    </location>
</feature>
<feature type="helix" evidence="36">
    <location>
        <begin position="345"/>
        <end position="354"/>
    </location>
</feature>
<feature type="strand" evidence="36">
    <location>
        <begin position="356"/>
        <end position="358"/>
    </location>
</feature>
<feature type="helix" evidence="36">
    <location>
        <begin position="362"/>
        <end position="373"/>
    </location>
</feature>
<feature type="strand" evidence="36">
    <location>
        <begin position="392"/>
        <end position="396"/>
    </location>
</feature>
<feature type="helix" evidence="36">
    <location>
        <begin position="402"/>
        <end position="412"/>
    </location>
</feature>
<feature type="strand" evidence="36">
    <location>
        <begin position="414"/>
        <end position="420"/>
    </location>
</feature>
<feature type="turn" evidence="36">
    <location>
        <begin position="421"/>
        <end position="423"/>
    </location>
</feature>
<feature type="turn" evidence="36">
    <location>
        <begin position="426"/>
        <end position="428"/>
    </location>
</feature>
<feature type="strand" evidence="36">
    <location>
        <begin position="429"/>
        <end position="435"/>
    </location>
</feature>
<feature type="strand" evidence="36">
    <location>
        <begin position="437"/>
        <end position="440"/>
    </location>
</feature>
<feature type="strand" evidence="36">
    <location>
        <begin position="442"/>
        <end position="446"/>
    </location>
</feature>
<feature type="helix" evidence="36">
    <location>
        <begin position="448"/>
        <end position="451"/>
    </location>
</feature>
<feature type="turn" evidence="36">
    <location>
        <begin position="452"/>
        <end position="454"/>
    </location>
</feature>
<feature type="strand" evidence="36">
    <location>
        <begin position="455"/>
        <end position="461"/>
    </location>
</feature>
<feature type="helix" evidence="36">
    <location>
        <begin position="462"/>
        <end position="464"/>
    </location>
</feature>
<feature type="helix" evidence="36">
    <location>
        <begin position="467"/>
        <end position="479"/>
    </location>
</feature>
<feature type="strand" evidence="36">
    <location>
        <begin position="481"/>
        <end position="486"/>
    </location>
</feature>
<feature type="strand" evidence="36">
    <location>
        <begin position="489"/>
        <end position="494"/>
    </location>
</feature>
<feature type="strand" evidence="36">
    <location>
        <begin position="498"/>
        <end position="503"/>
    </location>
</feature>
<feature type="helix" evidence="36">
    <location>
        <begin position="516"/>
        <end position="518"/>
    </location>
</feature>
<feature type="helix" evidence="36">
    <location>
        <begin position="524"/>
        <end position="529"/>
    </location>
</feature>
<feature type="strand" evidence="36">
    <location>
        <begin position="531"/>
        <end position="536"/>
    </location>
</feature>
<feature type="helix" evidence="36">
    <location>
        <begin position="544"/>
        <end position="557"/>
    </location>
</feature>
<feature type="strand" evidence="36">
    <location>
        <begin position="558"/>
        <end position="562"/>
    </location>
</feature>
<feature type="helix" evidence="36">
    <location>
        <begin position="569"/>
        <end position="579"/>
    </location>
</feature>
<feature type="helix" evidence="36">
    <location>
        <begin position="588"/>
        <end position="603"/>
    </location>
</feature>
<feature type="strand" evidence="36">
    <location>
        <begin position="612"/>
        <end position="614"/>
    </location>
</feature>
<feature type="helix" evidence="36">
    <location>
        <begin position="618"/>
        <end position="635"/>
    </location>
</feature>
<feature type="strand" evidence="36">
    <location>
        <begin position="638"/>
        <end position="640"/>
    </location>
</feature>
<feature type="helix" evidence="36">
    <location>
        <begin position="642"/>
        <end position="655"/>
    </location>
</feature>
<feature type="helix" evidence="35">
    <location>
        <begin position="709"/>
        <end position="711"/>
    </location>
</feature>
<feature type="strand" evidence="35">
    <location>
        <begin position="714"/>
        <end position="716"/>
    </location>
</feature>
<feature type="helix" evidence="36">
    <location>
        <begin position="718"/>
        <end position="737"/>
    </location>
</feature>
<feature type="strand" evidence="34">
    <location>
        <begin position="739"/>
        <end position="741"/>
    </location>
</feature>
<feature type="helix" evidence="36">
    <location>
        <begin position="745"/>
        <end position="756"/>
    </location>
</feature>
<feature type="turn" evidence="36">
    <location>
        <begin position="757"/>
        <end position="759"/>
    </location>
</feature>
<feature type="helix" evidence="36">
    <location>
        <begin position="763"/>
        <end position="782"/>
    </location>
</feature>
<feature type="helix" evidence="34">
    <location>
        <begin position="793"/>
        <end position="796"/>
    </location>
</feature>
<gene>
    <name evidence="20" type="primary">MCM6</name>
</gene>